<feature type="chain" id="PRO_0000363937" description="Dynein axonemal assembly factor 1 homolog">
    <location>
        <begin position="1"/>
        <end position="1483"/>
    </location>
</feature>
<feature type="repeat" description="LRR 1">
    <location>
        <begin position="34"/>
        <end position="56"/>
    </location>
</feature>
<feature type="repeat" description="LRR 2">
    <location>
        <begin position="57"/>
        <end position="78"/>
    </location>
</feature>
<feature type="repeat" description="LRR 3">
    <location>
        <begin position="79"/>
        <end position="100"/>
    </location>
</feature>
<feature type="repeat" description="LRR 4">
    <location>
        <begin position="101"/>
        <end position="122"/>
    </location>
</feature>
<feature type="repeat" description="LRR 5">
    <location>
        <begin position="125"/>
        <end position="146"/>
    </location>
</feature>
<feature type="repeat" description="LRR 6">
    <location>
        <begin position="150"/>
        <end position="171"/>
    </location>
</feature>
<feature type="domain" description="LRRCT">
    <location>
        <begin position="185"/>
        <end position="223"/>
    </location>
</feature>
<feature type="region of interest" description="Disordered" evidence="2">
    <location>
        <begin position="249"/>
        <end position="282"/>
    </location>
</feature>
<feature type="region of interest" description="Disordered" evidence="2">
    <location>
        <begin position="300"/>
        <end position="327"/>
    </location>
</feature>
<feature type="region of interest" description="Disordered" evidence="2">
    <location>
        <begin position="945"/>
        <end position="986"/>
    </location>
</feature>
<feature type="region of interest" description="Disordered" evidence="2">
    <location>
        <begin position="1167"/>
        <end position="1213"/>
    </location>
</feature>
<feature type="compositionally biased region" description="Polar residues" evidence="2">
    <location>
        <begin position="311"/>
        <end position="327"/>
    </location>
</feature>
<feature type="compositionally biased region" description="Basic and acidic residues" evidence="2">
    <location>
        <begin position="1183"/>
        <end position="1196"/>
    </location>
</feature>
<feature type="sequence conflict" description="In Ref. 1; AAL12209." evidence="3" ref="1">
    <original>D</original>
    <variation>E</variation>
    <location>
        <position position="1110"/>
    </location>
</feature>
<feature type="sequence conflict" description="In Ref. 1; AAL12209." evidence="3" ref="1">
    <original>R</original>
    <variation>C</variation>
    <location>
        <position position="1269"/>
    </location>
</feature>
<comment type="function">
    <text evidence="1">Cilium-specific protein required for cilia structures.</text>
</comment>
<comment type="subcellular location">
    <subcellularLocation>
        <location evidence="1">Cell projection</location>
        <location evidence="1">Cilium</location>
    </subcellularLocation>
</comment>
<comment type="similarity">
    <text evidence="3">Belongs to the DNAAF1 family.</text>
</comment>
<name>DAAF1_DROME</name>
<reference key="1">
    <citation type="submission" date="2001-08" db="EMBL/GenBank/DDBJ databases">
        <title>Molecular characterization of the Drosophila dtr gene encoding a novel protein involved in neurotransmitter distribution and recycling.</title>
        <authorList>
            <person name="Lee H.S."/>
            <person name="Burg M.G."/>
            <person name="Sarthy P.V."/>
            <person name="Leung H.-T."/>
            <person name="Koliantz G."/>
            <person name="Pak W.L."/>
        </authorList>
    </citation>
    <scope>NUCLEOTIDE SEQUENCE [MRNA]</scope>
    <source>
        <strain>Oregon-R</strain>
    </source>
</reference>
<reference key="2">
    <citation type="journal article" date="2000" name="Science">
        <title>The genome sequence of Drosophila melanogaster.</title>
        <authorList>
            <person name="Adams M.D."/>
            <person name="Celniker S.E."/>
            <person name="Holt R.A."/>
            <person name="Evans C.A."/>
            <person name="Gocayne J.D."/>
            <person name="Amanatides P.G."/>
            <person name="Scherer S.E."/>
            <person name="Li P.W."/>
            <person name="Hoskins R.A."/>
            <person name="Galle R.F."/>
            <person name="George R.A."/>
            <person name="Lewis S.E."/>
            <person name="Richards S."/>
            <person name="Ashburner M."/>
            <person name="Henderson S.N."/>
            <person name="Sutton G.G."/>
            <person name="Wortman J.R."/>
            <person name="Yandell M.D."/>
            <person name="Zhang Q."/>
            <person name="Chen L.X."/>
            <person name="Brandon R.C."/>
            <person name="Rogers Y.-H.C."/>
            <person name="Blazej R.G."/>
            <person name="Champe M."/>
            <person name="Pfeiffer B.D."/>
            <person name="Wan K.H."/>
            <person name="Doyle C."/>
            <person name="Baxter E.G."/>
            <person name="Helt G."/>
            <person name="Nelson C.R."/>
            <person name="Miklos G.L.G."/>
            <person name="Abril J.F."/>
            <person name="Agbayani A."/>
            <person name="An H.-J."/>
            <person name="Andrews-Pfannkoch C."/>
            <person name="Baldwin D."/>
            <person name="Ballew R.M."/>
            <person name="Basu A."/>
            <person name="Baxendale J."/>
            <person name="Bayraktaroglu L."/>
            <person name="Beasley E.M."/>
            <person name="Beeson K.Y."/>
            <person name="Benos P.V."/>
            <person name="Berman B.P."/>
            <person name="Bhandari D."/>
            <person name="Bolshakov S."/>
            <person name="Borkova D."/>
            <person name="Botchan M.R."/>
            <person name="Bouck J."/>
            <person name="Brokstein P."/>
            <person name="Brottier P."/>
            <person name="Burtis K.C."/>
            <person name="Busam D.A."/>
            <person name="Butler H."/>
            <person name="Cadieu E."/>
            <person name="Center A."/>
            <person name="Chandra I."/>
            <person name="Cherry J.M."/>
            <person name="Cawley S."/>
            <person name="Dahlke C."/>
            <person name="Davenport L.B."/>
            <person name="Davies P."/>
            <person name="de Pablos B."/>
            <person name="Delcher A."/>
            <person name="Deng Z."/>
            <person name="Mays A.D."/>
            <person name="Dew I."/>
            <person name="Dietz S.M."/>
            <person name="Dodson K."/>
            <person name="Doup L.E."/>
            <person name="Downes M."/>
            <person name="Dugan-Rocha S."/>
            <person name="Dunkov B.C."/>
            <person name="Dunn P."/>
            <person name="Durbin K.J."/>
            <person name="Evangelista C.C."/>
            <person name="Ferraz C."/>
            <person name="Ferriera S."/>
            <person name="Fleischmann W."/>
            <person name="Fosler C."/>
            <person name="Gabrielian A.E."/>
            <person name="Garg N.S."/>
            <person name="Gelbart W.M."/>
            <person name="Glasser K."/>
            <person name="Glodek A."/>
            <person name="Gong F."/>
            <person name="Gorrell J.H."/>
            <person name="Gu Z."/>
            <person name="Guan P."/>
            <person name="Harris M."/>
            <person name="Harris N.L."/>
            <person name="Harvey D.A."/>
            <person name="Heiman T.J."/>
            <person name="Hernandez J.R."/>
            <person name="Houck J."/>
            <person name="Hostin D."/>
            <person name="Houston K.A."/>
            <person name="Howland T.J."/>
            <person name="Wei M.-H."/>
            <person name="Ibegwam C."/>
            <person name="Jalali M."/>
            <person name="Kalush F."/>
            <person name="Karpen G.H."/>
            <person name="Ke Z."/>
            <person name="Kennison J.A."/>
            <person name="Ketchum K.A."/>
            <person name="Kimmel B.E."/>
            <person name="Kodira C.D."/>
            <person name="Kraft C.L."/>
            <person name="Kravitz S."/>
            <person name="Kulp D."/>
            <person name="Lai Z."/>
            <person name="Lasko P."/>
            <person name="Lei Y."/>
            <person name="Levitsky A.A."/>
            <person name="Li J.H."/>
            <person name="Li Z."/>
            <person name="Liang Y."/>
            <person name="Lin X."/>
            <person name="Liu X."/>
            <person name="Mattei B."/>
            <person name="McIntosh T.C."/>
            <person name="McLeod M.P."/>
            <person name="McPherson D."/>
            <person name="Merkulov G."/>
            <person name="Milshina N.V."/>
            <person name="Mobarry C."/>
            <person name="Morris J."/>
            <person name="Moshrefi A."/>
            <person name="Mount S.M."/>
            <person name="Moy M."/>
            <person name="Murphy B."/>
            <person name="Murphy L."/>
            <person name="Muzny D.M."/>
            <person name="Nelson D.L."/>
            <person name="Nelson D.R."/>
            <person name="Nelson K.A."/>
            <person name="Nixon K."/>
            <person name="Nusskern D.R."/>
            <person name="Pacleb J.M."/>
            <person name="Palazzolo M."/>
            <person name="Pittman G.S."/>
            <person name="Pan S."/>
            <person name="Pollard J."/>
            <person name="Puri V."/>
            <person name="Reese M.G."/>
            <person name="Reinert K."/>
            <person name="Remington K."/>
            <person name="Saunders R.D.C."/>
            <person name="Scheeler F."/>
            <person name="Shen H."/>
            <person name="Shue B.C."/>
            <person name="Siden-Kiamos I."/>
            <person name="Simpson M."/>
            <person name="Skupski M.P."/>
            <person name="Smith T.J."/>
            <person name="Spier E."/>
            <person name="Spradling A.C."/>
            <person name="Stapleton M."/>
            <person name="Strong R."/>
            <person name="Sun E."/>
            <person name="Svirskas R."/>
            <person name="Tector C."/>
            <person name="Turner R."/>
            <person name="Venter E."/>
            <person name="Wang A.H."/>
            <person name="Wang X."/>
            <person name="Wang Z.-Y."/>
            <person name="Wassarman D.A."/>
            <person name="Weinstock G.M."/>
            <person name="Weissenbach J."/>
            <person name="Williams S.M."/>
            <person name="Woodage T."/>
            <person name="Worley K.C."/>
            <person name="Wu D."/>
            <person name="Yang S."/>
            <person name="Yao Q.A."/>
            <person name="Ye J."/>
            <person name="Yeh R.-F."/>
            <person name="Zaveri J.S."/>
            <person name="Zhan M."/>
            <person name="Zhang G."/>
            <person name="Zhao Q."/>
            <person name="Zheng L."/>
            <person name="Zheng X.H."/>
            <person name="Zhong F.N."/>
            <person name="Zhong W."/>
            <person name="Zhou X."/>
            <person name="Zhu S.C."/>
            <person name="Zhu X."/>
            <person name="Smith H.O."/>
            <person name="Gibbs R.A."/>
            <person name="Myers E.W."/>
            <person name="Rubin G.M."/>
            <person name="Venter J.C."/>
        </authorList>
    </citation>
    <scope>NUCLEOTIDE SEQUENCE [LARGE SCALE GENOMIC DNA]</scope>
    <source>
        <strain>Berkeley</strain>
    </source>
</reference>
<reference key="3">
    <citation type="journal article" date="2002" name="Genome Biol.">
        <title>Annotation of the Drosophila melanogaster euchromatic genome: a systematic review.</title>
        <authorList>
            <person name="Misra S."/>
            <person name="Crosby M.A."/>
            <person name="Mungall C.J."/>
            <person name="Matthews B.B."/>
            <person name="Campbell K.S."/>
            <person name="Hradecky P."/>
            <person name="Huang Y."/>
            <person name="Kaminker J.S."/>
            <person name="Millburn G.H."/>
            <person name="Prochnik S.E."/>
            <person name="Smith C.D."/>
            <person name="Tupy J.L."/>
            <person name="Whitfield E.J."/>
            <person name="Bayraktaroglu L."/>
            <person name="Berman B.P."/>
            <person name="Bettencourt B.R."/>
            <person name="Celniker S.E."/>
            <person name="de Grey A.D.N.J."/>
            <person name="Drysdale R.A."/>
            <person name="Harris N.L."/>
            <person name="Richter J."/>
            <person name="Russo S."/>
            <person name="Schroeder A.J."/>
            <person name="Shu S.Q."/>
            <person name="Stapleton M."/>
            <person name="Yamada C."/>
            <person name="Ashburner M."/>
            <person name="Gelbart W.M."/>
            <person name="Rubin G.M."/>
            <person name="Lewis S.E."/>
        </authorList>
    </citation>
    <scope>GENOME REANNOTATION</scope>
    <source>
        <strain>Berkeley</strain>
    </source>
</reference>
<protein>
    <recommendedName>
        <fullName>Dynein axonemal assembly factor 1 homolog</fullName>
    </recommendedName>
    <alternativeName>
        <fullName>Defective transmitter-recycling protein</fullName>
    </alternativeName>
    <alternativeName>
        <fullName>Leucine-rich repeat-containing protein 50 homolog</fullName>
    </alternativeName>
</protein>
<keyword id="KW-0966">Cell projection</keyword>
<keyword id="KW-0969">Cilium</keyword>
<keyword id="KW-0433">Leucine-rich repeat</keyword>
<keyword id="KW-1185">Reference proteome</keyword>
<keyword id="KW-0677">Repeat</keyword>
<gene>
    <name type="primary">dtr</name>
    <name type="ORF">CG31623</name>
</gene>
<dbReference type="EMBL" id="AY049773">
    <property type="protein sequence ID" value="AAL12209.1"/>
    <property type="molecule type" value="mRNA"/>
</dbReference>
<dbReference type="EMBL" id="AE014134">
    <property type="protein sequence ID" value="AAN11119.2"/>
    <property type="molecule type" value="Genomic_DNA"/>
</dbReference>
<dbReference type="RefSeq" id="NP_724335.2">
    <property type="nucleotide sequence ID" value="NM_165375.3"/>
</dbReference>
<dbReference type="SMR" id="Q8INT5"/>
<dbReference type="BioGRID" id="77147">
    <property type="interactions" value="1"/>
</dbReference>
<dbReference type="FunCoup" id="Q8INT5">
    <property type="interactions" value="1"/>
</dbReference>
<dbReference type="IntAct" id="Q8INT5">
    <property type="interactions" value="7"/>
</dbReference>
<dbReference type="STRING" id="7227.FBpp0081044"/>
<dbReference type="PaxDb" id="7227-FBpp0081044"/>
<dbReference type="EnsemblMetazoa" id="FBtr0081516">
    <property type="protein sequence ID" value="FBpp0081044"/>
    <property type="gene ID" value="FBgn0023090"/>
</dbReference>
<dbReference type="GeneID" id="318856"/>
<dbReference type="KEGG" id="dme:Dmel_CG31623"/>
<dbReference type="UCSC" id="CG31623-RA">
    <property type="organism name" value="d. melanogaster"/>
</dbReference>
<dbReference type="AGR" id="FB:FBgn0023090"/>
<dbReference type="CTD" id="318856"/>
<dbReference type="FlyBase" id="FBgn0023090">
    <property type="gene designation" value="dtr"/>
</dbReference>
<dbReference type="VEuPathDB" id="VectorBase:FBgn0023090"/>
<dbReference type="eggNOG" id="ENOG502QQFE">
    <property type="taxonomic scope" value="Eukaryota"/>
</dbReference>
<dbReference type="GeneTree" id="ENSGT00940000158494"/>
<dbReference type="HOGENOM" id="CLU_001523_0_0_1"/>
<dbReference type="InParanoid" id="Q8INT5"/>
<dbReference type="OMA" id="WKREGYE"/>
<dbReference type="OrthoDB" id="1904536at2759"/>
<dbReference type="PhylomeDB" id="Q8INT5"/>
<dbReference type="Reactome" id="R-DME-9013424">
    <property type="pathway name" value="RHOV GTPase cycle"/>
</dbReference>
<dbReference type="BioGRID-ORCS" id="318856">
    <property type="hits" value="0 hits in 1 CRISPR screen"/>
</dbReference>
<dbReference type="ChiTaRS" id="Trxr-1">
    <property type="organism name" value="fly"/>
</dbReference>
<dbReference type="GenomeRNAi" id="318856"/>
<dbReference type="PRO" id="PR:Q8INT5"/>
<dbReference type="Proteomes" id="UP000000803">
    <property type="component" value="Chromosome 2L"/>
</dbReference>
<dbReference type="Bgee" id="FBgn0023090">
    <property type="expression patterns" value="Expressed in mechanosensory neuron of leg chordotonal organ in insect leg and 24 other cell types or tissues"/>
</dbReference>
<dbReference type="GO" id="GO:0005930">
    <property type="term" value="C:axoneme"/>
    <property type="evidence" value="ECO:0000250"/>
    <property type="project" value="UniProtKB"/>
</dbReference>
<dbReference type="GO" id="GO:0045202">
    <property type="term" value="C:synapse"/>
    <property type="evidence" value="ECO:0007669"/>
    <property type="project" value="GOC"/>
</dbReference>
<dbReference type="GO" id="GO:0070840">
    <property type="term" value="F:dynein complex binding"/>
    <property type="evidence" value="ECO:0000250"/>
    <property type="project" value="UniProtKB"/>
</dbReference>
<dbReference type="GO" id="GO:0035082">
    <property type="term" value="P:axoneme assembly"/>
    <property type="evidence" value="ECO:0000318"/>
    <property type="project" value="GO_Central"/>
</dbReference>
<dbReference type="GO" id="GO:0007268">
    <property type="term" value="P:chemical synaptic transmission"/>
    <property type="evidence" value="ECO:0000315"/>
    <property type="project" value="FlyBase"/>
</dbReference>
<dbReference type="GO" id="GO:0060271">
    <property type="term" value="P:cilium assembly"/>
    <property type="evidence" value="ECO:0000250"/>
    <property type="project" value="UniProtKB"/>
</dbReference>
<dbReference type="FunFam" id="3.80.10.10:FF:000166">
    <property type="entry name" value="Dynein assembly factor 1, axonemal"/>
    <property type="match status" value="1"/>
</dbReference>
<dbReference type="FunFam" id="3.80.10.10:FF:000331">
    <property type="entry name" value="Dynein assembly factor 1, axonemal homolog"/>
    <property type="match status" value="1"/>
</dbReference>
<dbReference type="Gene3D" id="3.80.10.10">
    <property type="entry name" value="Ribonuclease Inhibitor"/>
    <property type="match status" value="2"/>
</dbReference>
<dbReference type="InterPro" id="IPR050576">
    <property type="entry name" value="Cilia_flagella_integrity"/>
</dbReference>
<dbReference type="InterPro" id="IPR001611">
    <property type="entry name" value="Leu-rich_rpt"/>
</dbReference>
<dbReference type="InterPro" id="IPR032675">
    <property type="entry name" value="LRR_dom_sf"/>
</dbReference>
<dbReference type="PANTHER" id="PTHR45973:SF9">
    <property type="entry name" value="LEUCINE-RICH REPEAT-CONTAINING PROTEIN 46"/>
    <property type="match status" value="1"/>
</dbReference>
<dbReference type="PANTHER" id="PTHR45973">
    <property type="entry name" value="PROTEIN PHOSPHATASE 1 REGULATORY SUBUNIT SDS22-RELATED"/>
    <property type="match status" value="1"/>
</dbReference>
<dbReference type="Pfam" id="PF14580">
    <property type="entry name" value="LRR_9"/>
    <property type="match status" value="1"/>
</dbReference>
<dbReference type="SMART" id="SM00365">
    <property type="entry name" value="LRR_SD22"/>
    <property type="match status" value="3"/>
</dbReference>
<dbReference type="SUPFAM" id="SSF52075">
    <property type="entry name" value="Outer arm dynein light chain 1"/>
    <property type="match status" value="1"/>
</dbReference>
<dbReference type="PROSITE" id="PS51450">
    <property type="entry name" value="LRR"/>
    <property type="match status" value="6"/>
</dbReference>
<organism>
    <name type="scientific">Drosophila melanogaster</name>
    <name type="common">Fruit fly</name>
    <dbReference type="NCBI Taxonomy" id="7227"/>
    <lineage>
        <taxon>Eukaryota</taxon>
        <taxon>Metazoa</taxon>
        <taxon>Ecdysozoa</taxon>
        <taxon>Arthropoda</taxon>
        <taxon>Hexapoda</taxon>
        <taxon>Insecta</taxon>
        <taxon>Pterygota</taxon>
        <taxon>Neoptera</taxon>
        <taxon>Endopterygota</taxon>
        <taxon>Diptera</taxon>
        <taxon>Brachycera</taxon>
        <taxon>Muscomorpha</taxon>
        <taxon>Ephydroidea</taxon>
        <taxon>Drosophilidae</taxon>
        <taxon>Drosophila</taxon>
        <taxon>Sophophora</taxon>
    </lineage>
</organism>
<accession>Q8INT5</accession>
<accession>Q6YNS3</accession>
<proteinExistence type="evidence at transcript level"/>
<sequence>MSNSNRKEITGLNRMTPKGLKELCKKDKLYQTPRLNDVLYLHYQGFQCIESLEEYTELKCLWLECNAISEIQGLEKLSKLKCLFLQNNLITKIENLDPCRELDTLNLSSNHIRKIQNIGTNVLPVLNTLTISSNYLKDSESLSDLIQCKTLSVLDLSNNRIDDILIVKIFEQMLNLKVLVLQGNPVVSRLPQYRKTLILACKELTYLDSRPVFPRDRACAEAWKRDGYEGERKENNRWNRAERRKTRESINCTIRMRNSHRPPDQQDPLLRSSDSEDDTCAETARKKVALENGCVDDLWEEVSGEQPISEDGTNSSSSLEDNDGTSSQDDLIAEKLSNRRTLEGRPTVLYETEVSNVKSANNDINIFEEGVGKASQIIIEDKPVTKIKLINEPSCMNDKSAMNCTSMGPVVKENDFDEDAEIKNVDDMVPCQNLIKSNEDINSEFGFSSKLKQDFDQTCTALRNDAECKEFDEELTIKESESKPFNEMYDIFAAEDDKLNETLDLNLNETTCPHHVHDNFFSEQNKMPSFYEEDIMINLLPKTKEKTLLEKDSIIENEKCAHDLDEMGRQMEEDLAELRQSTQNLIGISIDETARTDSETDEEDLIAQQDPYSPLLKQQFKDRRMKIMLTEETKAQEESLSDRNIALSNESDQDDKQDQLFAKILDDATENIPKRIFGTGCDALSSVWPQEECLLQLTLPENKESPAQEDTFKKSITNSTSFEKANEICVRMDQKMAEEEEALGKLLHDLEGEINNVYDINTKVKYEENTSTNESDAVSICTSLLDDIIVGLTFDEVLCHEKPKSFEFGLIESDEEFSYSFEPKLEKLVPPALEDPARGKSLRECLDTFSDFVSSMADPKLPVMLGRNPTSGVEKIRAAQELLKTKNLSDLYKDTAESLNSQVAKEIEKRKRRVAASATRCFNQRDKYDDTLELVENRLMIVKKDSGDLEELPPPPPLISDTESEDDNPTEDNYTPGNEVHRHGTKTQDSKEHLMSNLLNQNQDDIIEGKKNDSAEDEFYSLEAMTTFGNLDAEFFQKLDLQKVNASEDSEPAINCMRSYNELQAYMKSGSLNTQLNSEEAEMLQTMCSRVASDVDKPKSQNSKEEEEDDLLKKMVLRMKEYEEREHQLQLISHETSSELGPIKLSIGGSKLFEQNTKIPESVLVHSENEPTRNNKPINTKNTNDKESSDIMEKNGDPSVTTSFKTSHKSIDDDIQSDVSTDYESGEEVVVVEPPTLSEAVLKSFYSDEFEADSKMVHELEEATRRNLRRYNPNIMHISTSNHPFSTNNILPTKTSTSELSEGAKAKWAKIAERLHEFLDPETIANLNKEQFGESDECEDSQDDNITDITVEETNLKKDTKLVVLEEYNNTHTCDGNSCPSKLDDSDQFASLKGFEKIKETPTHNMGLSSVMSASQNKTSETLPNEIGNKITDFSSFKTSSTDLINSEGVKTEQIQCNLQILSDEGDVVVEELSVNAQVSSFK</sequence>
<evidence type="ECO:0000250" key="1"/>
<evidence type="ECO:0000256" key="2">
    <source>
        <dbReference type="SAM" id="MobiDB-lite"/>
    </source>
</evidence>
<evidence type="ECO:0000305" key="3"/>